<protein>
    <recommendedName>
        <fullName evidence="8">Monothiol glutaredoxin-5, mitochondrial</fullName>
    </recommendedName>
</protein>
<gene>
    <name evidence="9" type="primary">GRX5</name>
    <name evidence="9" type="ordered locus">YPL059W</name>
    <name type="ORF">LPE13W</name>
</gene>
<proteinExistence type="evidence at protein level"/>
<comment type="function">
    <text evidence="3 4 6 7">Monothiol glutaredoxin involved in mitochondrial iron-sulfur (Fe/S) cluster transfer (PubMed:11950925, PubMed:12730244, PubMed:23615440). Receives 2Fe/2S clusters from scaffold protein ISU1 and mediates their transfer to apoproteins, to the 4Fe/FS cluster biosynthesis machinery, or export from mitochondrion (PubMed:23615440, PubMed:27532773).</text>
</comment>
<comment type="biophysicochemical properties">
    <redoxPotential>
        <text evidence="4">E(0) is -175 mV.</text>
    </redoxPotential>
</comment>
<comment type="subunit">
    <text evidence="1 6 7">Homodimer (By similarity). Interacts with SSQ1 (PubMed:23615440). Interacts with BOL1 (PubMed:27532773).</text>
</comment>
<comment type="subcellular location">
    <subcellularLocation>
        <location evidence="3">Mitochondrion matrix</location>
    </subcellularLocation>
</comment>
<comment type="miscellaneous">
    <text evidence="5">Present with 6260 molecules/cell in log phase SD medium.</text>
</comment>
<comment type="similarity">
    <text evidence="8">Belongs to the glutaredoxin family. Monothiol subfamily.</text>
</comment>
<feature type="transit peptide" description="Mitochondrion" evidence="3">
    <location>
        <begin position="1"/>
        <end position="29"/>
    </location>
</feature>
<feature type="chain" id="PRO_0000011632" description="Monothiol glutaredoxin-5, mitochondrial">
    <location>
        <begin position="30"/>
        <end position="150"/>
    </location>
</feature>
<feature type="domain" description="Glutaredoxin" evidence="2">
    <location>
        <begin position="35"/>
        <end position="140"/>
    </location>
</feature>
<feature type="binding site" evidence="1">
    <location>
        <position position="52"/>
    </location>
    <ligand>
        <name>glutathione</name>
        <dbReference type="ChEBI" id="CHEBI:57925"/>
    </ligand>
</feature>
<feature type="binding site" evidence="1">
    <location>
        <position position="60"/>
    </location>
    <ligand>
        <name>[2Fe-2S] cluster</name>
        <dbReference type="ChEBI" id="CHEBI:190135"/>
        <note>ligand shared between dimeric partners</note>
    </ligand>
</feature>
<feature type="binding site" evidence="1">
    <location>
        <begin position="92"/>
        <end position="96"/>
    </location>
    <ligand>
        <name>glutathione</name>
        <dbReference type="ChEBI" id="CHEBI:57925"/>
    </ligand>
</feature>
<feature type="binding site" evidence="1">
    <location>
        <position position="104"/>
    </location>
    <ligand>
        <name>glutathione</name>
        <dbReference type="ChEBI" id="CHEBI:57925"/>
    </ligand>
</feature>
<feature type="binding site" evidence="1">
    <location>
        <begin position="117"/>
        <end position="118"/>
    </location>
    <ligand>
        <name>glutathione</name>
        <dbReference type="ChEBI" id="CHEBI:57925"/>
    </ligand>
</feature>
<feature type="helix" evidence="10">
    <location>
        <begin position="32"/>
        <end position="43"/>
    </location>
</feature>
<feature type="strand" evidence="10">
    <location>
        <begin position="46"/>
        <end position="53"/>
    </location>
</feature>
<feature type="strand" evidence="10">
    <location>
        <begin position="55"/>
        <end position="58"/>
    </location>
</feature>
<feature type="helix" evidence="10">
    <location>
        <begin position="62"/>
        <end position="73"/>
    </location>
</feature>
<feature type="helix" evidence="10">
    <location>
        <begin position="77"/>
        <end position="79"/>
    </location>
</feature>
<feature type="strand" evidence="10">
    <location>
        <begin position="80"/>
        <end position="84"/>
    </location>
</feature>
<feature type="helix" evidence="10">
    <location>
        <begin position="89"/>
        <end position="99"/>
    </location>
</feature>
<feature type="strand" evidence="10">
    <location>
        <begin position="106"/>
        <end position="109"/>
    </location>
</feature>
<feature type="strand" evidence="10">
    <location>
        <begin position="112"/>
        <end position="116"/>
    </location>
</feature>
<feature type="helix" evidence="10">
    <location>
        <begin position="117"/>
        <end position="126"/>
    </location>
</feature>
<feature type="helix" evidence="10">
    <location>
        <begin position="128"/>
        <end position="135"/>
    </location>
</feature>
<name>GLRX5_YEAST</name>
<reference key="1">
    <citation type="journal article" date="1997" name="Nature">
        <title>The nucleotide sequence of Saccharomyces cerevisiae chromosome XVI.</title>
        <authorList>
            <person name="Bussey H."/>
            <person name="Storms R.K."/>
            <person name="Ahmed A."/>
            <person name="Albermann K."/>
            <person name="Allen E."/>
            <person name="Ansorge W."/>
            <person name="Araujo R."/>
            <person name="Aparicio A."/>
            <person name="Barrell B.G."/>
            <person name="Badcock K."/>
            <person name="Benes V."/>
            <person name="Botstein D."/>
            <person name="Bowman S."/>
            <person name="Brueckner M."/>
            <person name="Carpenter J."/>
            <person name="Cherry J.M."/>
            <person name="Chung E."/>
            <person name="Churcher C.M."/>
            <person name="Coster F."/>
            <person name="Davis K."/>
            <person name="Davis R.W."/>
            <person name="Dietrich F.S."/>
            <person name="Delius H."/>
            <person name="DiPaolo T."/>
            <person name="Dubois E."/>
            <person name="Duesterhoeft A."/>
            <person name="Duncan M."/>
            <person name="Floeth M."/>
            <person name="Fortin N."/>
            <person name="Friesen J.D."/>
            <person name="Fritz C."/>
            <person name="Goffeau A."/>
            <person name="Hall J."/>
            <person name="Hebling U."/>
            <person name="Heumann K."/>
            <person name="Hilbert H."/>
            <person name="Hillier L.W."/>
            <person name="Hunicke-Smith S."/>
            <person name="Hyman R.W."/>
            <person name="Johnston M."/>
            <person name="Kalman S."/>
            <person name="Kleine K."/>
            <person name="Komp C."/>
            <person name="Kurdi O."/>
            <person name="Lashkari D."/>
            <person name="Lew H."/>
            <person name="Lin A."/>
            <person name="Lin D."/>
            <person name="Louis E.J."/>
            <person name="Marathe R."/>
            <person name="Messenguy F."/>
            <person name="Mewes H.-W."/>
            <person name="Mirtipati S."/>
            <person name="Moestl D."/>
            <person name="Mueller-Auer S."/>
            <person name="Namath A."/>
            <person name="Nentwich U."/>
            <person name="Oefner P."/>
            <person name="Pearson D."/>
            <person name="Petel F.X."/>
            <person name="Pohl T.M."/>
            <person name="Purnelle B."/>
            <person name="Rajandream M.A."/>
            <person name="Rechmann S."/>
            <person name="Rieger M."/>
            <person name="Riles L."/>
            <person name="Roberts D."/>
            <person name="Schaefer M."/>
            <person name="Scharfe M."/>
            <person name="Scherens B."/>
            <person name="Schramm S."/>
            <person name="Schroeder M."/>
            <person name="Sdicu A.-M."/>
            <person name="Tettelin H."/>
            <person name="Urrestarazu L.A."/>
            <person name="Ushinsky S."/>
            <person name="Vierendeels F."/>
            <person name="Vissers S."/>
            <person name="Voss H."/>
            <person name="Walsh S.V."/>
            <person name="Wambutt R."/>
            <person name="Wang Y."/>
            <person name="Wedler E."/>
            <person name="Wedler H."/>
            <person name="Winnett E."/>
            <person name="Zhong W.-W."/>
            <person name="Zollner A."/>
            <person name="Vo D.H."/>
            <person name="Hani J."/>
        </authorList>
    </citation>
    <scope>NUCLEOTIDE SEQUENCE [LARGE SCALE GENOMIC DNA]</scope>
    <source>
        <strain>ATCC 204508 / S288c</strain>
    </source>
</reference>
<reference key="2">
    <citation type="journal article" date="2014" name="G3 (Bethesda)">
        <title>The reference genome sequence of Saccharomyces cerevisiae: Then and now.</title>
        <authorList>
            <person name="Engel S.R."/>
            <person name="Dietrich F.S."/>
            <person name="Fisk D.G."/>
            <person name="Binkley G."/>
            <person name="Balakrishnan R."/>
            <person name="Costanzo M.C."/>
            <person name="Dwight S.S."/>
            <person name="Hitz B.C."/>
            <person name="Karra K."/>
            <person name="Nash R.S."/>
            <person name="Weng S."/>
            <person name="Wong E.D."/>
            <person name="Lloyd P."/>
            <person name="Skrzypek M.S."/>
            <person name="Miyasato S.R."/>
            <person name="Simison M."/>
            <person name="Cherry J.M."/>
        </authorList>
    </citation>
    <scope>GENOME REANNOTATION</scope>
    <source>
        <strain>ATCC 204508 / S288c</strain>
    </source>
</reference>
<reference key="3">
    <citation type="journal article" date="2002" name="Mol. Biol. Cell">
        <title>Grx5 is a mitochondrial glutaredoxin required for the activity of iron/sulfur enzymes.</title>
        <authorList>
            <person name="Rodriguez-Manzaneque M.T."/>
            <person name="Tamarit J."/>
            <person name="Belli G."/>
            <person name="Ros J."/>
            <person name="Herrero E."/>
        </authorList>
    </citation>
    <scope>PROTEIN SEQUENCE OF N-TERMINUS</scope>
    <scope>FUNCTION</scope>
    <scope>SUBCELLULAR LOCATION</scope>
</reference>
<reference key="4">
    <citation type="journal article" date="2003" name="J. Biol. Chem.">
        <title>Biochemical characterization of yeast mitochondrial Grx5 monothiol glutaredoxin.</title>
        <authorList>
            <person name="Tamarit J."/>
            <person name="Belli G."/>
            <person name="Cabiscol E."/>
            <person name="Herrero E."/>
            <person name="Ros J."/>
        </authorList>
    </citation>
    <scope>FUNCTION</scope>
    <scope>BIOPHYSICOCHEMICAL PROPERTIES</scope>
</reference>
<reference key="5">
    <citation type="journal article" date="2003" name="Nature">
        <title>Global analysis of protein expression in yeast.</title>
        <authorList>
            <person name="Ghaemmaghami S."/>
            <person name="Huh W.-K."/>
            <person name="Bower K."/>
            <person name="Howson R.W."/>
            <person name="Belle A."/>
            <person name="Dephoure N."/>
            <person name="O'Shea E.K."/>
            <person name="Weissman J.S."/>
        </authorList>
    </citation>
    <scope>LEVEL OF PROTEIN EXPRESSION [LARGE SCALE ANALYSIS]</scope>
</reference>
<reference key="6">
    <citation type="journal article" date="2013" name="Mol. Biol. Cell">
        <title>The mitochondrial Hsp70 chaperone Ssq1 facilitates Fe/S cluster transfer from Isu1 to Grx5 by complex formation.</title>
        <authorList>
            <person name="Uzarska M.A."/>
            <person name="Dutkiewicz R."/>
            <person name="Freibert S.A."/>
            <person name="Lill R."/>
            <person name="Muehlenhoff U."/>
        </authorList>
    </citation>
    <scope>FUNCTION</scope>
    <scope>INTERACTION WITH SSQ1</scope>
</reference>
<reference key="7">
    <citation type="journal article" date="2016" name="Elife">
        <title>Role of Nfu1 and Bol3 in iron-sulfur cluster transfer to mitochondrial clients.</title>
        <authorList>
            <person name="Melber A."/>
            <person name="Na U."/>
            <person name="Vashisht A."/>
            <person name="Weiler B.D."/>
            <person name="Lill R."/>
            <person name="Wohlschlegel J.A."/>
            <person name="Winge D.R."/>
        </authorList>
    </citation>
    <scope>FUNCTION</scope>
    <scope>INTERACTION WITH BOL1</scope>
</reference>
<evidence type="ECO:0000250" key="1">
    <source>
        <dbReference type="UniProtKB" id="Q86SX6"/>
    </source>
</evidence>
<evidence type="ECO:0000255" key="2">
    <source>
        <dbReference type="PROSITE-ProRule" id="PRU00686"/>
    </source>
</evidence>
<evidence type="ECO:0000269" key="3">
    <source>
    </source>
</evidence>
<evidence type="ECO:0000269" key="4">
    <source>
    </source>
</evidence>
<evidence type="ECO:0000269" key="5">
    <source>
    </source>
</evidence>
<evidence type="ECO:0000269" key="6">
    <source>
    </source>
</evidence>
<evidence type="ECO:0000269" key="7">
    <source>
    </source>
</evidence>
<evidence type="ECO:0000305" key="8"/>
<evidence type="ECO:0000312" key="9">
    <source>
        <dbReference type="SGD" id="S000005980"/>
    </source>
</evidence>
<evidence type="ECO:0007829" key="10">
    <source>
        <dbReference type="PDB" id="3GX8"/>
    </source>
</evidence>
<keyword id="KW-0001">2Fe-2S</keyword>
<keyword id="KW-0002">3D-structure</keyword>
<keyword id="KW-0903">Direct protein sequencing</keyword>
<keyword id="KW-0408">Iron</keyword>
<keyword id="KW-0411">Iron-sulfur</keyword>
<keyword id="KW-0479">Metal-binding</keyword>
<keyword id="KW-0496">Mitochondrion</keyword>
<keyword id="KW-0676">Redox-active center</keyword>
<keyword id="KW-1185">Reference proteome</keyword>
<keyword id="KW-0809">Transit peptide</keyword>
<accession>Q02784</accession>
<accession>D6W3V5</accession>
<sequence length="150" mass="16931">MFLPKFNPIRSFSPILRAKTLLRYQNRMYLSTEIRKAIEDAIESAPVVLFMKGTPEFPKCGFSRATIGLLGNQGVDPAKFAAYNVLEDPELREGIKEFSEWPTIPQLYVNKEFIGGCDVITSMARSGELADLLEEAQALVPEEEEETKDR</sequence>
<organism>
    <name type="scientific">Saccharomyces cerevisiae (strain ATCC 204508 / S288c)</name>
    <name type="common">Baker's yeast</name>
    <dbReference type="NCBI Taxonomy" id="559292"/>
    <lineage>
        <taxon>Eukaryota</taxon>
        <taxon>Fungi</taxon>
        <taxon>Dikarya</taxon>
        <taxon>Ascomycota</taxon>
        <taxon>Saccharomycotina</taxon>
        <taxon>Saccharomycetes</taxon>
        <taxon>Saccharomycetales</taxon>
        <taxon>Saccharomycetaceae</taxon>
        <taxon>Saccharomyces</taxon>
    </lineage>
</organism>
<dbReference type="EMBL" id="U39205">
    <property type="protein sequence ID" value="AAB68306.1"/>
    <property type="molecule type" value="Genomic_DNA"/>
</dbReference>
<dbReference type="EMBL" id="BK006949">
    <property type="protein sequence ID" value="DAA11371.1"/>
    <property type="molecule type" value="Genomic_DNA"/>
</dbReference>
<dbReference type="PIR" id="S60931">
    <property type="entry name" value="S60931"/>
</dbReference>
<dbReference type="RefSeq" id="NP_015266.1">
    <property type="nucleotide sequence ID" value="NM_001183873.1"/>
</dbReference>
<dbReference type="PDB" id="3GX8">
    <property type="method" value="X-ray"/>
    <property type="resolution" value="1.67 A"/>
    <property type="chains" value="A=30-150"/>
</dbReference>
<dbReference type="PDBsum" id="3GX8"/>
<dbReference type="SMR" id="Q02784"/>
<dbReference type="BioGRID" id="36121">
    <property type="interactions" value="70"/>
</dbReference>
<dbReference type="ComplexPortal" id="CPX-6928">
    <property type="entry name" value="BOL1-GRX5 iron-sulfur cluster assembly complex"/>
</dbReference>
<dbReference type="ComplexPortal" id="CPX-6930">
    <property type="entry name" value="BOL3-GRX5 iron-sulfur cluster assembly complex"/>
</dbReference>
<dbReference type="ComplexPortal" id="CPX-6957">
    <property type="entry name" value="GRX5 iron-sulfur cluster assembly homodimer complex"/>
</dbReference>
<dbReference type="DIP" id="DIP-1352N"/>
<dbReference type="FunCoup" id="Q02784">
    <property type="interactions" value="1253"/>
</dbReference>
<dbReference type="IntAct" id="Q02784">
    <property type="interactions" value="30"/>
</dbReference>
<dbReference type="MINT" id="Q02784"/>
<dbReference type="STRING" id="4932.YPL059W"/>
<dbReference type="iPTMnet" id="Q02784"/>
<dbReference type="PaxDb" id="4932-YPL059W"/>
<dbReference type="PeptideAtlas" id="Q02784"/>
<dbReference type="EnsemblFungi" id="YPL059W_mRNA">
    <property type="protein sequence ID" value="YPL059W"/>
    <property type="gene ID" value="YPL059W"/>
</dbReference>
<dbReference type="GeneID" id="856048"/>
<dbReference type="KEGG" id="sce:YPL059W"/>
<dbReference type="AGR" id="SGD:S000005980"/>
<dbReference type="SGD" id="S000005980">
    <property type="gene designation" value="GRX5"/>
</dbReference>
<dbReference type="VEuPathDB" id="FungiDB:YPL059W"/>
<dbReference type="eggNOG" id="KOG0911">
    <property type="taxonomic scope" value="Eukaryota"/>
</dbReference>
<dbReference type="GeneTree" id="ENSGT00550000075082"/>
<dbReference type="HOGENOM" id="CLU_026126_2_0_1"/>
<dbReference type="InParanoid" id="Q02784"/>
<dbReference type="OMA" id="TKLMPQC"/>
<dbReference type="OrthoDB" id="415696at2759"/>
<dbReference type="BioCyc" id="YEAST:G3O-33970-MONOMER"/>
<dbReference type="Reactome" id="R-SCE-1362409">
    <property type="pathway name" value="Mitochondrial iron-sulfur cluster biogenesis"/>
</dbReference>
<dbReference type="BioGRID-ORCS" id="856048">
    <property type="hits" value="2 hits in 10 CRISPR screens"/>
</dbReference>
<dbReference type="EvolutionaryTrace" id="Q02784"/>
<dbReference type="PRO" id="PR:Q02784"/>
<dbReference type="Proteomes" id="UP000002311">
    <property type="component" value="Chromosome XVI"/>
</dbReference>
<dbReference type="RNAct" id="Q02784">
    <property type="molecule type" value="protein"/>
</dbReference>
<dbReference type="GO" id="GO:1990229">
    <property type="term" value="C:iron-sulfur cluster assembly complex"/>
    <property type="evidence" value="ECO:0000353"/>
    <property type="project" value="ComplexPortal"/>
</dbReference>
<dbReference type="GO" id="GO:0005759">
    <property type="term" value="C:mitochondrial matrix"/>
    <property type="evidence" value="ECO:0000314"/>
    <property type="project" value="ComplexPortal"/>
</dbReference>
<dbReference type="GO" id="GO:0005739">
    <property type="term" value="C:mitochondrion"/>
    <property type="evidence" value="ECO:0007005"/>
    <property type="project" value="SGD"/>
</dbReference>
<dbReference type="GO" id="GO:0051537">
    <property type="term" value="F:2 iron, 2 sulfur cluster binding"/>
    <property type="evidence" value="ECO:0000314"/>
    <property type="project" value="SGD"/>
</dbReference>
<dbReference type="GO" id="GO:0015036">
    <property type="term" value="F:disulfide oxidoreductase activity"/>
    <property type="evidence" value="ECO:0000314"/>
    <property type="project" value="SGD"/>
</dbReference>
<dbReference type="GO" id="GO:0046872">
    <property type="term" value="F:metal ion binding"/>
    <property type="evidence" value="ECO:0007669"/>
    <property type="project" value="UniProtKB-KW"/>
</dbReference>
<dbReference type="GO" id="GO:0044571">
    <property type="term" value="P:[2Fe-2S] cluster assembly"/>
    <property type="evidence" value="ECO:0000315"/>
    <property type="project" value="SGD"/>
</dbReference>
<dbReference type="GO" id="GO:0044572">
    <property type="term" value="P:[4Fe-4S] cluster assembly"/>
    <property type="evidence" value="ECO:0000315"/>
    <property type="project" value="SGD"/>
</dbReference>
<dbReference type="GO" id="GO:0034599">
    <property type="term" value="P:cellular response to oxidative stress"/>
    <property type="evidence" value="ECO:0000315"/>
    <property type="project" value="SGD"/>
</dbReference>
<dbReference type="GO" id="GO:0006879">
    <property type="term" value="P:intracellular iron ion homeostasis"/>
    <property type="evidence" value="ECO:0000303"/>
    <property type="project" value="ComplexPortal"/>
</dbReference>
<dbReference type="GO" id="GO:0016226">
    <property type="term" value="P:iron-sulfur cluster assembly"/>
    <property type="evidence" value="ECO:0000315"/>
    <property type="project" value="SGD"/>
</dbReference>
<dbReference type="GO" id="GO:0006970">
    <property type="term" value="P:response to osmotic stress"/>
    <property type="evidence" value="ECO:0000315"/>
    <property type="project" value="SGD"/>
</dbReference>
<dbReference type="CDD" id="cd03028">
    <property type="entry name" value="GRX_PICOT_like"/>
    <property type="match status" value="1"/>
</dbReference>
<dbReference type="FunFam" id="3.40.30.10:FF:000005">
    <property type="entry name" value="Glutaredoxin 5"/>
    <property type="match status" value="1"/>
</dbReference>
<dbReference type="Gene3D" id="3.40.30.10">
    <property type="entry name" value="Glutaredoxin"/>
    <property type="match status" value="1"/>
</dbReference>
<dbReference type="InterPro" id="IPR002109">
    <property type="entry name" value="Glutaredoxin"/>
</dbReference>
<dbReference type="InterPro" id="IPR033658">
    <property type="entry name" value="GRX_PICOT-like"/>
</dbReference>
<dbReference type="InterPro" id="IPR004480">
    <property type="entry name" value="Monothiol_GRX-rel"/>
</dbReference>
<dbReference type="InterPro" id="IPR036249">
    <property type="entry name" value="Thioredoxin-like_sf"/>
</dbReference>
<dbReference type="NCBIfam" id="TIGR00365">
    <property type="entry name" value="Grx4 family monothiol glutaredoxin"/>
    <property type="match status" value="1"/>
</dbReference>
<dbReference type="PANTHER" id="PTHR10293">
    <property type="entry name" value="GLUTAREDOXIN FAMILY MEMBER"/>
    <property type="match status" value="1"/>
</dbReference>
<dbReference type="PANTHER" id="PTHR10293:SF16">
    <property type="entry name" value="GLUTAREDOXIN-RELATED PROTEIN 5, MITOCHONDRIAL"/>
    <property type="match status" value="1"/>
</dbReference>
<dbReference type="Pfam" id="PF00462">
    <property type="entry name" value="Glutaredoxin"/>
    <property type="match status" value="1"/>
</dbReference>
<dbReference type="SUPFAM" id="SSF52833">
    <property type="entry name" value="Thioredoxin-like"/>
    <property type="match status" value="1"/>
</dbReference>
<dbReference type="PROSITE" id="PS51354">
    <property type="entry name" value="GLUTAREDOXIN_2"/>
    <property type="match status" value="1"/>
</dbReference>